<gene>
    <name evidence="5" type="primary">IPN2</name>
</gene>
<reference key="1">
    <citation type="journal article" date="2014" name="New Phytol.">
        <title>A MYB coiled-coil transcription factor interacts with NSP2 and is involved in nodulation in Lotus japonicus.</title>
        <authorList>
            <person name="Kang H."/>
            <person name="Chu X."/>
            <person name="Wang C."/>
            <person name="Xiao A."/>
            <person name="Zhu H."/>
            <person name="Yuan S."/>
            <person name="Yang Z."/>
            <person name="Ke D."/>
            <person name="Xiao S."/>
            <person name="Hong Z."/>
            <person name="Zhang Z."/>
        </authorList>
    </citation>
    <scope>NUCLEOTIDE SEQUENCE [MRNA]</scope>
    <scope>FUNCTION</scope>
    <scope>INTERACTION WITH NSP2</scope>
    <scope>SUBCELLULAR LOCATION</scope>
    <scope>TISSUE SPECIFICITY</scope>
    <scope>INDUCTION</scope>
</reference>
<organism>
    <name type="scientific">Lotus japonicus</name>
    <name type="common">Lotus corniculatus var. japonicus</name>
    <dbReference type="NCBI Taxonomy" id="34305"/>
    <lineage>
        <taxon>Eukaryota</taxon>
        <taxon>Viridiplantae</taxon>
        <taxon>Streptophyta</taxon>
        <taxon>Embryophyta</taxon>
        <taxon>Tracheophyta</taxon>
        <taxon>Spermatophyta</taxon>
        <taxon>Magnoliopsida</taxon>
        <taxon>eudicotyledons</taxon>
        <taxon>Gunneridae</taxon>
        <taxon>Pentapetalae</taxon>
        <taxon>rosids</taxon>
        <taxon>fabids</taxon>
        <taxon>Fabales</taxon>
        <taxon>Fabaceae</taxon>
        <taxon>Papilionoideae</taxon>
        <taxon>50 kb inversion clade</taxon>
        <taxon>NPAAA clade</taxon>
        <taxon>Hologalegina</taxon>
        <taxon>robinioid clade</taxon>
        <taxon>Loteae</taxon>
        <taxon>Lotus</taxon>
    </lineage>
</organism>
<comment type="function">
    <text evidence="4">Transcriptional regulator required for Nod-factor-induced gene expression (PubMed:24400899). Transcription activator involved in the induction of NIN and ENOD40 genes, which are required for rhizobial infection and early nodule development (PubMed:24400899). Possesses strong transactivation activity in vitro (PubMed:24400899). Does not seem to contribute to the early steps of the arbuscular mycorrhizal fungus infection and colonization processes in roots (PubMed:24400899).</text>
</comment>
<comment type="subunit">
    <text evidence="4">Interacts with NSP2.</text>
</comment>
<comment type="subcellular location">
    <subcellularLocation>
        <location evidence="2 4">Nucleus</location>
    </subcellularLocation>
</comment>
<comment type="tissue specificity">
    <text evidence="4">Expressed in leaves, stems, nodules and roots.</text>
</comment>
<comment type="induction">
    <text evidence="4">Induced in roots after inoculation with Mesorhizobium loti.</text>
</comment>
<comment type="miscellaneous">
    <text evidence="4">Roots of plants silencing IPN2 exhibit decreased rhizobial infection and nodule organogenesis under nitrogen limitation when inoculated with Mesorhizobium loti.</text>
</comment>
<comment type="similarity">
    <text evidence="6">Belongs to the MYB-CC family.</text>
</comment>
<evidence type="ECO:0000255" key="1"/>
<evidence type="ECO:0000255" key="2">
    <source>
        <dbReference type="PROSITE-ProRule" id="PRU00625"/>
    </source>
</evidence>
<evidence type="ECO:0000256" key="3">
    <source>
        <dbReference type="SAM" id="MobiDB-lite"/>
    </source>
</evidence>
<evidence type="ECO:0000269" key="4">
    <source>
    </source>
</evidence>
<evidence type="ECO:0000303" key="5">
    <source>
    </source>
</evidence>
<evidence type="ECO:0000305" key="6"/>
<keyword id="KW-0010">Activator</keyword>
<keyword id="KW-0175">Coiled coil</keyword>
<keyword id="KW-0238">DNA-binding</keyword>
<keyword id="KW-0536">Nodulation</keyword>
<keyword id="KW-0539">Nucleus</keyword>
<keyword id="KW-0804">Transcription</keyword>
<keyword id="KW-0805">Transcription regulation</keyword>
<proteinExistence type="evidence at protein level"/>
<dbReference type="EMBL" id="HQ343457">
    <property type="protein sequence ID" value="ADQ08683.1"/>
    <property type="molecule type" value="mRNA"/>
</dbReference>
<dbReference type="SMR" id="E5L8F7"/>
<dbReference type="OrthoDB" id="551907at2759"/>
<dbReference type="GO" id="GO:0005634">
    <property type="term" value="C:nucleus"/>
    <property type="evidence" value="ECO:0007669"/>
    <property type="project" value="UniProtKB-SubCell"/>
</dbReference>
<dbReference type="GO" id="GO:0003677">
    <property type="term" value="F:DNA binding"/>
    <property type="evidence" value="ECO:0007669"/>
    <property type="project" value="UniProtKB-KW"/>
</dbReference>
<dbReference type="GO" id="GO:0003700">
    <property type="term" value="F:DNA-binding transcription factor activity"/>
    <property type="evidence" value="ECO:0007669"/>
    <property type="project" value="InterPro"/>
</dbReference>
<dbReference type="GO" id="GO:0009877">
    <property type="term" value="P:nodulation"/>
    <property type="evidence" value="ECO:0007669"/>
    <property type="project" value="UniProtKB-KW"/>
</dbReference>
<dbReference type="FunFam" id="1.10.10.60:FF:000002">
    <property type="entry name" value="Myb family transcription factor"/>
    <property type="match status" value="1"/>
</dbReference>
<dbReference type="Gene3D" id="1.10.10.60">
    <property type="entry name" value="Homeodomain-like"/>
    <property type="match status" value="1"/>
</dbReference>
<dbReference type="InterPro" id="IPR009057">
    <property type="entry name" value="Homeodomain-like_sf"/>
</dbReference>
<dbReference type="InterPro" id="IPR025756">
    <property type="entry name" value="Myb_CC_LHEQLE"/>
</dbReference>
<dbReference type="InterPro" id="IPR017930">
    <property type="entry name" value="Myb_dom"/>
</dbReference>
<dbReference type="InterPro" id="IPR006447">
    <property type="entry name" value="Myb_dom_plants"/>
</dbReference>
<dbReference type="InterPro" id="IPR046955">
    <property type="entry name" value="PHR1-like"/>
</dbReference>
<dbReference type="InterPro" id="IPR001005">
    <property type="entry name" value="SANT/Myb"/>
</dbReference>
<dbReference type="NCBIfam" id="TIGR01557">
    <property type="entry name" value="myb_SHAQKYF"/>
    <property type="match status" value="1"/>
</dbReference>
<dbReference type="PANTHER" id="PTHR31499:SF43">
    <property type="entry name" value="MYB FAMILY TRANSCRIPTION FACTOR APL"/>
    <property type="match status" value="1"/>
</dbReference>
<dbReference type="PANTHER" id="PTHR31499">
    <property type="entry name" value="MYB FAMILY TRANSCRIPTION FACTOR PHL11"/>
    <property type="match status" value="1"/>
</dbReference>
<dbReference type="Pfam" id="PF14379">
    <property type="entry name" value="Myb_CC_LHEQLE"/>
    <property type="match status" value="1"/>
</dbReference>
<dbReference type="Pfam" id="PF00249">
    <property type="entry name" value="Myb_DNA-binding"/>
    <property type="match status" value="1"/>
</dbReference>
<dbReference type="SUPFAM" id="SSF46689">
    <property type="entry name" value="Homeodomain-like"/>
    <property type="match status" value="1"/>
</dbReference>
<dbReference type="PROSITE" id="PS51294">
    <property type="entry name" value="HTH_MYB"/>
    <property type="match status" value="1"/>
</dbReference>
<feature type="chain" id="PRO_0000448274" description="Myb family transcription factor IPN2">
    <location>
        <begin position="1"/>
        <end position="358"/>
    </location>
</feature>
<feature type="domain" description="HTH myb-type" evidence="2">
    <location>
        <begin position="32"/>
        <end position="92"/>
    </location>
</feature>
<feature type="DNA-binding region" description="H-T-H motif" evidence="2">
    <location>
        <begin position="63"/>
        <end position="88"/>
    </location>
</feature>
<feature type="region of interest" description="Disordered" evidence="3">
    <location>
        <begin position="1"/>
        <end position="20"/>
    </location>
</feature>
<feature type="region of interest" description="Disordered" evidence="3">
    <location>
        <begin position="310"/>
        <end position="358"/>
    </location>
</feature>
<feature type="coiled-coil region" evidence="1">
    <location>
        <begin position="127"/>
        <end position="171"/>
    </location>
</feature>
<feature type="short sequence motif" description="LHEQLE" evidence="6">
    <location>
        <begin position="139"/>
        <end position="144"/>
    </location>
</feature>
<feature type="compositionally biased region" description="Basic and acidic residues" evidence="3">
    <location>
        <begin position="311"/>
        <end position="330"/>
    </location>
</feature>
<feature type="compositionally biased region" description="Polar residues" evidence="3">
    <location>
        <begin position="343"/>
        <end position="358"/>
    </location>
</feature>
<protein>
    <recommendedName>
        <fullName evidence="6">Myb family transcription factor IPN2</fullName>
    </recommendedName>
    <alternativeName>
        <fullName evidence="5">Interacting protein of NSP2</fullName>
        <shortName evidence="5">LjIPN2</shortName>
    </alternativeName>
</protein>
<accession>E5L8F7</accession>
<name>IPN2_LOTJA</name>
<sequence>MERMFPPKKPSTMNSHDRPMCVQGDSGLVLTTDPKPRLRWTVELHERFVDAVTQLGGPDKATPKTIMRVMGVKGLTLYHLKSHLQKFRLGKQPHKEFNDHSIKDGMRASALELQRNTASSSAMIGRNMNEMQIEVQRRLHEQLEVQKHLQLRIEAQGKYMQSILEKAYQTLAGENMASAATNLKGIGPQTIPDMGIMKEFGSPLGFSFQDLDLYGGGGGDQLELQQNMEKPPLDGFMPMNHENLCLGKKRPNPYSGNNGKSPLMWSDDLRLQDLGSCLQDDPFKGDHHHQIQIAPPSLDRGTEMDPMSEIYDSKPEEKKFDASMKLERPSPRRAPLGERMSPMITTGTMAQGRSSPFG</sequence>